<gene>
    <name evidence="6" type="primary">adal-1</name>
    <name evidence="6" type="ORF">C44B7.12</name>
</gene>
<accession>Q8IG39</accession>
<comment type="function">
    <text evidence="2">Catalyzes the hydrolysis of the free cytosolic methylated adenosine nucleotide N(6)-methyl-AMP (N6-mAMP) to produce inositol monophosphate (IMP) and methylamine. Is required for the catabolism of cytosolic N6-mAMP, which is derived from the degradation of mRNA containing N6-methylated adenine (m6A).</text>
</comment>
<comment type="catalytic activity">
    <reaction evidence="2">
        <text>N(6)-methyl-AMP + H2O + H(+) = IMP + methylamine</text>
        <dbReference type="Rhea" id="RHEA:16001"/>
        <dbReference type="ChEBI" id="CHEBI:15377"/>
        <dbReference type="ChEBI" id="CHEBI:15378"/>
        <dbReference type="ChEBI" id="CHEBI:58053"/>
        <dbReference type="ChEBI" id="CHEBI:59338"/>
        <dbReference type="ChEBI" id="CHEBI:144842"/>
    </reaction>
    <physiologicalReaction direction="left-to-right" evidence="2">
        <dbReference type="Rhea" id="RHEA:16002"/>
    </physiologicalReaction>
</comment>
<comment type="cofactor">
    <cofactor evidence="2">
        <name>Zn(2+)</name>
        <dbReference type="ChEBI" id="CHEBI:29105"/>
    </cofactor>
    <text evidence="2">Binds 1 zinc ion per subunit.</text>
</comment>
<comment type="subunit">
    <text evidence="2">Monomer.</text>
</comment>
<comment type="similarity">
    <text evidence="5">Belongs to the metallo-dependent hydrolases superfamily. Adenosine and AMP deaminases family.</text>
</comment>
<reference key="1">
    <citation type="journal article" date="1998" name="Science">
        <title>Genome sequence of the nematode C. elegans: a platform for investigating biology.</title>
        <authorList>
            <consortium name="The C. elegans sequencing consortium"/>
        </authorList>
    </citation>
    <scope>NUCLEOTIDE SEQUENCE [LARGE SCALE GENOMIC DNA]</scope>
    <source>
        <strain>Bristol N2</strain>
    </source>
</reference>
<feature type="chain" id="PRO_0000285096" description="Adenosine deaminase-like protein">
    <location>
        <begin position="1"/>
        <end position="388"/>
    </location>
</feature>
<feature type="region of interest" description="Disordered" evidence="4">
    <location>
        <begin position="1"/>
        <end position="34"/>
    </location>
</feature>
<feature type="compositionally biased region" description="Basic residues" evidence="4">
    <location>
        <begin position="1"/>
        <end position="13"/>
    </location>
</feature>
<feature type="compositionally biased region" description="Basic and acidic residues" evidence="4">
    <location>
        <begin position="14"/>
        <end position="34"/>
    </location>
</feature>
<feature type="active site" description="Proton donor" evidence="1">
    <location>
        <position position="248"/>
    </location>
</feature>
<feature type="binding site" evidence="3">
    <location>
        <position position="65"/>
    </location>
    <ligand>
        <name>Zn(2+)</name>
        <dbReference type="ChEBI" id="CHEBI:29105"/>
        <note>catalytic</note>
    </ligand>
</feature>
<feature type="binding site" evidence="3">
    <location>
        <position position="67"/>
    </location>
    <ligand>
        <name>N(6)-methyl-AMP</name>
        <dbReference type="ChEBI" id="CHEBI:144842"/>
    </ligand>
</feature>
<feature type="binding site" evidence="3">
    <location>
        <position position="67"/>
    </location>
    <ligand>
        <name>Zn(2+)</name>
        <dbReference type="ChEBI" id="CHEBI:29105"/>
        <note>catalytic</note>
    </ligand>
</feature>
<feature type="binding site" evidence="3">
    <location>
        <position position="114"/>
    </location>
    <ligand>
        <name>N(6)-methyl-AMP</name>
        <dbReference type="ChEBI" id="CHEBI:144842"/>
    </ligand>
</feature>
<feature type="binding site" evidence="3">
    <location>
        <begin position="146"/>
        <end position="149"/>
    </location>
    <ligand>
        <name>N(6)-methyl-AMP</name>
        <dbReference type="ChEBI" id="CHEBI:144842"/>
    </ligand>
</feature>
<feature type="binding site" evidence="3">
    <location>
        <position position="186"/>
    </location>
    <ligand>
        <name>N(6)-methyl-AMP</name>
        <dbReference type="ChEBI" id="CHEBI:144842"/>
    </ligand>
</feature>
<feature type="binding site" evidence="3">
    <location>
        <position position="218"/>
    </location>
    <ligand>
        <name>N(6)-methyl-AMP</name>
        <dbReference type="ChEBI" id="CHEBI:144842"/>
    </ligand>
</feature>
<feature type="binding site" evidence="3">
    <location>
        <position position="245"/>
    </location>
    <ligand>
        <name>Zn(2+)</name>
        <dbReference type="ChEBI" id="CHEBI:29105"/>
        <note>catalytic</note>
    </ligand>
</feature>
<feature type="binding site" evidence="3">
    <location>
        <position position="248"/>
    </location>
    <ligand>
        <name>N(6)-methyl-AMP</name>
        <dbReference type="ChEBI" id="CHEBI:144842"/>
    </ligand>
</feature>
<feature type="binding site" evidence="3">
    <location>
        <position position="326"/>
    </location>
    <ligand>
        <name>N(6)-methyl-AMP</name>
        <dbReference type="ChEBI" id="CHEBI:144842"/>
    </ligand>
</feature>
<feature type="binding site" evidence="3">
    <location>
        <position position="326"/>
    </location>
    <ligand>
        <name>Zn(2+)</name>
        <dbReference type="ChEBI" id="CHEBI:29105"/>
        <note>catalytic</note>
    </ligand>
</feature>
<feature type="binding site" evidence="3">
    <location>
        <position position="327"/>
    </location>
    <ligand>
        <name>N(6)-methyl-AMP</name>
        <dbReference type="ChEBI" id="CHEBI:144842"/>
    </ligand>
</feature>
<feature type="site" description="Important for catalytic activity" evidence="1">
    <location>
        <position position="269"/>
    </location>
</feature>
<organism>
    <name type="scientific">Caenorhabditis elegans</name>
    <dbReference type="NCBI Taxonomy" id="6239"/>
    <lineage>
        <taxon>Eukaryota</taxon>
        <taxon>Metazoa</taxon>
        <taxon>Ecdysozoa</taxon>
        <taxon>Nematoda</taxon>
        <taxon>Chromadorea</taxon>
        <taxon>Rhabditida</taxon>
        <taxon>Rhabditina</taxon>
        <taxon>Rhabditomorpha</taxon>
        <taxon>Rhabditoidea</taxon>
        <taxon>Rhabditidae</taxon>
        <taxon>Peloderinae</taxon>
        <taxon>Caenorhabditis</taxon>
    </lineage>
</organism>
<proteinExistence type="inferred from homology"/>
<keyword id="KW-0378">Hydrolase</keyword>
<keyword id="KW-0479">Metal-binding</keyword>
<keyword id="KW-0546">Nucleotide metabolism</keyword>
<keyword id="KW-1185">Reference proteome</keyword>
<keyword id="KW-0862">Zinc</keyword>
<sequence length="388" mass="44922">MPNNSKHKKKQQRRQQEAQKKSRAKQIETDKKNDEFLDTELDEVSPLVIDDDMTEFKNMPKVELHAHLSGSLSPETIKLIMESDETRAEEIMKKYKLEKPENMTGVFDCFPVIHAILRKPEAIRIAIRQTIKEFEEDNCVYLELRTSPKETDFMTYEDYLQVCIESFEAAKHEFPRIKTFLIVSLDRRMPFETAAHILGLIGEAQQRTNVIVGVELSGDPHLDGRRLLKLFVAARRFHGLGITIHLAEVLQNMADVEDYLNLRPDRIGHGTFLHTDPYTEYLTNKYKIPLEICLSSNVYSKTTTNYRNSHFNYWRKRGVPVFICTDDKGVIPGATLTEEYYKAAITFDLSTEELIGINQDALLNSFAYKYNVTDLTETFRKINNNVLD</sequence>
<name>ADAL_CAEEL</name>
<evidence type="ECO:0000250" key="1">
    <source>
        <dbReference type="UniProtKB" id="P03958"/>
    </source>
</evidence>
<evidence type="ECO:0000250" key="2">
    <source>
        <dbReference type="UniProtKB" id="Q6DHV7"/>
    </source>
</evidence>
<evidence type="ECO:0000250" key="3">
    <source>
        <dbReference type="UniProtKB" id="Q8LPL7"/>
    </source>
</evidence>
<evidence type="ECO:0000256" key="4">
    <source>
        <dbReference type="SAM" id="MobiDB-lite"/>
    </source>
</evidence>
<evidence type="ECO:0000305" key="5"/>
<evidence type="ECO:0000312" key="6">
    <source>
        <dbReference type="WormBase" id="C44B7.12"/>
    </source>
</evidence>
<protein>
    <recommendedName>
        <fullName>Adenosine deaminase-like protein</fullName>
        <ecNumber evidence="2">3.5.4.-</ecNumber>
    </recommendedName>
</protein>
<dbReference type="EC" id="3.5.4.-" evidence="2"/>
<dbReference type="EMBL" id="BX284602">
    <property type="protein sequence ID" value="CCD61565.1"/>
    <property type="molecule type" value="Genomic_DNA"/>
</dbReference>
<dbReference type="RefSeq" id="NP_871955.2">
    <property type="nucleotide sequence ID" value="NM_182155.5"/>
</dbReference>
<dbReference type="SMR" id="Q8IG39"/>
<dbReference type="FunCoup" id="Q8IG39">
    <property type="interactions" value="2335"/>
</dbReference>
<dbReference type="STRING" id="6239.C44B7.12.1"/>
<dbReference type="PaxDb" id="6239-C44B7.12"/>
<dbReference type="PeptideAtlas" id="Q8IG39"/>
<dbReference type="DNASU" id="259441"/>
<dbReference type="EnsemblMetazoa" id="C44B7.12.1">
    <property type="protein sequence ID" value="C44B7.12.1"/>
    <property type="gene ID" value="WBGene00016632"/>
</dbReference>
<dbReference type="GeneID" id="259441"/>
<dbReference type="KEGG" id="cel:CELE_C44B7.12"/>
<dbReference type="UCSC" id="C44B7.12">
    <property type="organism name" value="c. elegans"/>
</dbReference>
<dbReference type="AGR" id="WB:WBGene00016632"/>
<dbReference type="CTD" id="259441"/>
<dbReference type="WormBase" id="C44B7.12">
    <property type="protein sequence ID" value="CE39336"/>
    <property type="gene ID" value="WBGene00016632"/>
    <property type="gene designation" value="adal-1"/>
</dbReference>
<dbReference type="eggNOG" id="KOG1097">
    <property type="taxonomic scope" value="Eukaryota"/>
</dbReference>
<dbReference type="GeneTree" id="ENSGT00950000183113"/>
<dbReference type="HOGENOM" id="CLU_039228_3_0_1"/>
<dbReference type="InParanoid" id="Q8IG39"/>
<dbReference type="OMA" id="RPQFKPY"/>
<dbReference type="OrthoDB" id="272271at2759"/>
<dbReference type="PhylomeDB" id="Q8IG39"/>
<dbReference type="Reactome" id="R-CEL-2161541">
    <property type="pathway name" value="Abacavir metabolism"/>
</dbReference>
<dbReference type="Reactome" id="R-CEL-74217">
    <property type="pathway name" value="Purine salvage"/>
</dbReference>
<dbReference type="PRO" id="PR:Q8IG39"/>
<dbReference type="Proteomes" id="UP000001940">
    <property type="component" value="Chromosome II"/>
</dbReference>
<dbReference type="Bgee" id="WBGene00016632">
    <property type="expression patterns" value="Expressed in adult organism and 3 other cell types or tissues"/>
</dbReference>
<dbReference type="GO" id="GO:0004000">
    <property type="term" value="F:adenosine deaminase activity"/>
    <property type="evidence" value="ECO:0000318"/>
    <property type="project" value="GO_Central"/>
</dbReference>
<dbReference type="GO" id="GO:0046872">
    <property type="term" value="F:metal ion binding"/>
    <property type="evidence" value="ECO:0007669"/>
    <property type="project" value="UniProtKB-KW"/>
</dbReference>
<dbReference type="GO" id="GO:0062154">
    <property type="term" value="F:N6-methyl-AMP deaminase activity"/>
    <property type="evidence" value="ECO:0007669"/>
    <property type="project" value="RHEA"/>
</dbReference>
<dbReference type="GO" id="GO:0006154">
    <property type="term" value="P:adenosine catabolic process"/>
    <property type="evidence" value="ECO:0000318"/>
    <property type="project" value="GO_Central"/>
</dbReference>
<dbReference type="GO" id="GO:0046103">
    <property type="term" value="P:inosine biosynthetic process"/>
    <property type="evidence" value="ECO:0000318"/>
    <property type="project" value="GO_Central"/>
</dbReference>
<dbReference type="GO" id="GO:0009117">
    <property type="term" value="P:nucleotide metabolic process"/>
    <property type="evidence" value="ECO:0007669"/>
    <property type="project" value="UniProtKB-KW"/>
</dbReference>
<dbReference type="CDD" id="cd00443">
    <property type="entry name" value="ADA_AMPD"/>
    <property type="match status" value="1"/>
</dbReference>
<dbReference type="Gene3D" id="3.20.20.140">
    <property type="entry name" value="Metal-dependent hydrolases"/>
    <property type="match status" value="1"/>
</dbReference>
<dbReference type="InterPro" id="IPR001365">
    <property type="entry name" value="A_deaminase_dom"/>
</dbReference>
<dbReference type="InterPro" id="IPR006330">
    <property type="entry name" value="Ado/ade_deaminase"/>
</dbReference>
<dbReference type="InterPro" id="IPR032466">
    <property type="entry name" value="Metal_Hydrolase"/>
</dbReference>
<dbReference type="PANTHER" id="PTHR11409">
    <property type="entry name" value="ADENOSINE DEAMINASE"/>
    <property type="match status" value="1"/>
</dbReference>
<dbReference type="PANTHER" id="PTHR11409:SF42">
    <property type="entry name" value="ADENOSINE DEAMINASE-LIKE PROTEIN"/>
    <property type="match status" value="1"/>
</dbReference>
<dbReference type="Pfam" id="PF00962">
    <property type="entry name" value="A_deaminase"/>
    <property type="match status" value="1"/>
</dbReference>
<dbReference type="SUPFAM" id="SSF51556">
    <property type="entry name" value="Metallo-dependent hydrolases"/>
    <property type="match status" value="1"/>
</dbReference>